<sequence length="330" mass="36931">MCISKEDEEDPSRNRRNQSPLSLPQTLKHFQKDLLAGAVMGGVVHTIVAPIERAKLLLQTQESNIAIVGDEGHAGKRRFKGMFDFIFRTVREEGVLSLWRGNGSSVLRYYPSVALNFSLKDLYRSILRNSSSQENHIFSGALANFMAGSAAGCTALIVVYPLDIAHTRLAADIGKPEARQFRGIHHFLSTIHKKDGVRGIYRGLPASLHGVIIHRGLYFGGFDTVKEIFSEDTKPELALWKRWGLAQAVTTSAGLASYPLDTVRRRIMMQSGMEHPMYRSTLDCWKKIYRSEGLASFYRGALSNMFRSTGSAAILVFYDEVKRFLNWGGI</sequence>
<feature type="chain" id="PRO_0000410474" description="Probable ADP,ATP carrier protein At5g56450">
    <location>
        <begin position="1"/>
        <end position="330"/>
    </location>
</feature>
<feature type="transmembrane region" description="Helical; Name=1" evidence="1">
    <location>
        <begin position="27"/>
        <end position="61"/>
    </location>
</feature>
<feature type="transmembrane region" description="Helical; Name=2" evidence="1">
    <location>
        <begin position="103"/>
        <end position="127"/>
    </location>
</feature>
<feature type="transmembrane region" description="Helical; Name=3" evidence="1">
    <location>
        <begin position="137"/>
        <end position="171"/>
    </location>
</feature>
<feature type="transmembrane region" description="Helical; Name=4" evidence="1">
    <location>
        <begin position="203"/>
        <end position="230"/>
    </location>
</feature>
<feature type="transmembrane region" description="Helical; Name=5" evidence="1">
    <location>
        <begin position="236"/>
        <end position="270"/>
    </location>
</feature>
<feature type="transmembrane region" description="Helical; Name=6" evidence="1">
    <location>
        <begin position="300"/>
        <end position="325"/>
    </location>
</feature>
<feature type="repeat" description="Solcar 1">
    <location>
        <begin position="28"/>
        <end position="126"/>
    </location>
</feature>
<feature type="repeat" description="Solcar 2">
    <location>
        <begin position="139"/>
        <end position="228"/>
    </location>
</feature>
<feature type="repeat" description="Solcar 3">
    <location>
        <begin position="241"/>
        <end position="324"/>
    </location>
</feature>
<feature type="region of interest" description="Disordered" evidence="6">
    <location>
        <begin position="1"/>
        <end position="22"/>
    </location>
</feature>
<feature type="short sequence motif" description="Substrate recognition" evidence="1">
    <location>
        <begin position="264"/>
        <end position="269"/>
    </location>
</feature>
<feature type="compositionally biased region" description="Acidic residues" evidence="6">
    <location>
        <begin position="1"/>
        <end position="10"/>
    </location>
</feature>
<feature type="binding site" evidence="3">
    <location>
        <position position="108"/>
    </location>
    <ligand>
        <name>ADP</name>
        <dbReference type="ChEBI" id="CHEBI:456216"/>
    </ligand>
</feature>
<feature type="binding site" evidence="3">
    <location>
        <position position="120"/>
    </location>
    <ligand>
        <name>ADP</name>
        <dbReference type="ChEBI" id="CHEBI:456216"/>
    </ligand>
</feature>
<feature type="binding site" evidence="3">
    <location>
        <position position="264"/>
    </location>
    <ligand>
        <name>ADP</name>
        <dbReference type="ChEBI" id="CHEBI:456216"/>
    </ligand>
</feature>
<feature type="sequence conflict" description="In Ref. 4; AAM61122." evidence="7" ref="4">
    <original>A</original>
    <variation>S</variation>
    <location>
        <position position="178"/>
    </location>
</feature>
<keyword id="KW-0050">Antiport</keyword>
<keyword id="KW-0472">Membrane</keyword>
<keyword id="KW-1185">Reference proteome</keyword>
<keyword id="KW-0677">Repeat</keyword>
<keyword id="KW-0812">Transmembrane</keyword>
<keyword id="KW-1133">Transmembrane helix</keyword>
<keyword id="KW-0813">Transport</keyword>
<reference key="1">
    <citation type="journal article" date="1998" name="DNA Res.">
        <title>Structural analysis of Arabidopsis thaliana chromosome 5. IV. Sequence features of the regions of 1,456,315 bp covered by nineteen physically assigned P1 and TAC clones.</title>
        <authorList>
            <person name="Sato S."/>
            <person name="Kaneko T."/>
            <person name="Kotani H."/>
            <person name="Nakamura Y."/>
            <person name="Asamizu E."/>
            <person name="Miyajima N."/>
            <person name="Tabata S."/>
        </authorList>
    </citation>
    <scope>NUCLEOTIDE SEQUENCE [LARGE SCALE GENOMIC DNA]</scope>
    <source>
        <strain>cv. Columbia</strain>
    </source>
</reference>
<reference key="2">
    <citation type="journal article" date="2017" name="Plant J.">
        <title>Araport11: a complete reannotation of the Arabidopsis thaliana reference genome.</title>
        <authorList>
            <person name="Cheng C.Y."/>
            <person name="Krishnakumar V."/>
            <person name="Chan A.P."/>
            <person name="Thibaud-Nissen F."/>
            <person name="Schobel S."/>
            <person name="Town C.D."/>
        </authorList>
    </citation>
    <scope>GENOME REANNOTATION</scope>
    <source>
        <strain>cv. Columbia</strain>
    </source>
</reference>
<reference key="3">
    <citation type="submission" date="2006-06" db="EMBL/GenBank/DDBJ databases">
        <title>Arabidopsis ORF clones.</title>
        <authorList>
            <person name="Quinitio C."/>
            <person name="Chen H."/>
            <person name="Kim C.J."/>
            <person name="Shinn P."/>
            <person name="Ecker J.R."/>
        </authorList>
    </citation>
    <scope>NUCLEOTIDE SEQUENCE [LARGE SCALE MRNA]</scope>
    <source>
        <strain>cv. Columbia</strain>
    </source>
</reference>
<reference key="4">
    <citation type="submission" date="2002-03" db="EMBL/GenBank/DDBJ databases">
        <title>Full-length cDNA from Arabidopsis thaliana.</title>
        <authorList>
            <person name="Brover V.V."/>
            <person name="Troukhan M.E."/>
            <person name="Alexandrov N.A."/>
            <person name="Lu Y.-P."/>
            <person name="Flavell R.B."/>
            <person name="Feldmann K.A."/>
        </authorList>
    </citation>
    <scope>NUCLEOTIDE SEQUENCE [LARGE SCALE MRNA]</scope>
</reference>
<reference key="5">
    <citation type="journal article" date="2004" name="Trends Plant Sci.">
        <title>The growing family of mitochondrial carriers in Arabidopsis.</title>
        <authorList>
            <person name="Picault N."/>
            <person name="Hodges M."/>
            <person name="Palmieri L."/>
            <person name="Palmieri F."/>
        </authorList>
    </citation>
    <scope>GENE FAMILY</scope>
</reference>
<dbReference type="EMBL" id="AB009049">
    <property type="protein sequence ID" value="BAB11273.1"/>
    <property type="molecule type" value="Genomic_DNA"/>
</dbReference>
<dbReference type="EMBL" id="CP002688">
    <property type="protein sequence ID" value="AED96766.1"/>
    <property type="molecule type" value="Genomic_DNA"/>
</dbReference>
<dbReference type="EMBL" id="BT025880">
    <property type="protein sequence ID" value="ABF85782.1"/>
    <property type="molecule type" value="mRNA"/>
</dbReference>
<dbReference type="EMBL" id="AY084555">
    <property type="protein sequence ID" value="AAM61122.1"/>
    <property type="molecule type" value="mRNA"/>
</dbReference>
<dbReference type="RefSeq" id="NP_200456.1">
    <property type="nucleotide sequence ID" value="NM_125028.1"/>
</dbReference>
<dbReference type="SMR" id="Q9FM86"/>
<dbReference type="FunCoup" id="Q9FM86">
    <property type="interactions" value="104"/>
</dbReference>
<dbReference type="STRING" id="3702.Q9FM86"/>
<dbReference type="PaxDb" id="3702-AT5G56450.1"/>
<dbReference type="ProteomicsDB" id="244797"/>
<dbReference type="EnsemblPlants" id="AT5G56450.1">
    <property type="protein sequence ID" value="AT5G56450.1"/>
    <property type="gene ID" value="AT5G56450"/>
</dbReference>
<dbReference type="GeneID" id="835746"/>
<dbReference type="Gramene" id="AT5G56450.1">
    <property type="protein sequence ID" value="AT5G56450.1"/>
    <property type="gene ID" value="AT5G56450"/>
</dbReference>
<dbReference type="KEGG" id="ath:AT5G56450"/>
<dbReference type="Araport" id="AT5G56450"/>
<dbReference type="TAIR" id="AT5G56450">
    <property type="gene designation" value="PM-ANT"/>
</dbReference>
<dbReference type="eggNOG" id="KOG0749">
    <property type="taxonomic scope" value="Eukaryota"/>
</dbReference>
<dbReference type="HOGENOM" id="CLU_015166_12_0_1"/>
<dbReference type="InParanoid" id="Q9FM86"/>
<dbReference type="OMA" id="FRGIHHF"/>
<dbReference type="OrthoDB" id="270584at2759"/>
<dbReference type="PhylomeDB" id="Q9FM86"/>
<dbReference type="PRO" id="PR:Q9FM86"/>
<dbReference type="Proteomes" id="UP000006548">
    <property type="component" value="Chromosome 5"/>
</dbReference>
<dbReference type="ExpressionAtlas" id="Q9FM86">
    <property type="expression patterns" value="baseline and differential"/>
</dbReference>
<dbReference type="GO" id="GO:0005743">
    <property type="term" value="C:mitochondrial inner membrane"/>
    <property type="evidence" value="ECO:0007669"/>
    <property type="project" value="InterPro"/>
</dbReference>
<dbReference type="GO" id="GO:0005347">
    <property type="term" value="F:ATP transmembrane transporter activity"/>
    <property type="evidence" value="ECO:0000314"/>
    <property type="project" value="TAIR"/>
</dbReference>
<dbReference type="GO" id="GO:0005471">
    <property type="term" value="F:ATP:ADP antiporter activity"/>
    <property type="evidence" value="ECO:0007669"/>
    <property type="project" value="InterPro"/>
</dbReference>
<dbReference type="GO" id="GO:0048653">
    <property type="term" value="P:anther development"/>
    <property type="evidence" value="ECO:0000315"/>
    <property type="project" value="TAIR"/>
</dbReference>
<dbReference type="GO" id="GO:0140021">
    <property type="term" value="P:mitochondrial ADP transmembrane transport"/>
    <property type="evidence" value="ECO:0007669"/>
    <property type="project" value="InterPro"/>
</dbReference>
<dbReference type="GO" id="GO:1990544">
    <property type="term" value="P:mitochondrial ATP transmembrane transport"/>
    <property type="evidence" value="ECO:0007669"/>
    <property type="project" value="InterPro"/>
</dbReference>
<dbReference type="FunFam" id="1.50.40.10:FF:000071">
    <property type="entry name" value="probable ADP,ATP carrier protein At5g56450"/>
    <property type="match status" value="1"/>
</dbReference>
<dbReference type="Gene3D" id="1.50.40.10">
    <property type="entry name" value="Mitochondrial carrier domain"/>
    <property type="match status" value="1"/>
</dbReference>
<dbReference type="InterPro" id="IPR002113">
    <property type="entry name" value="ADT_euk_type"/>
</dbReference>
<dbReference type="InterPro" id="IPR002067">
    <property type="entry name" value="Mit_carrier"/>
</dbReference>
<dbReference type="InterPro" id="IPR018108">
    <property type="entry name" value="Mitochondrial_sb/sol_carrier"/>
</dbReference>
<dbReference type="InterPro" id="IPR023395">
    <property type="entry name" value="Mt_carrier_dom_sf"/>
</dbReference>
<dbReference type="PANTHER" id="PTHR45635">
    <property type="entry name" value="ADP,ATP CARRIER PROTEIN 1-RELATED-RELATED"/>
    <property type="match status" value="1"/>
</dbReference>
<dbReference type="PANTHER" id="PTHR45635:SF31">
    <property type="entry name" value="ADP_ATP TRANSLOCASE"/>
    <property type="match status" value="1"/>
</dbReference>
<dbReference type="Pfam" id="PF00153">
    <property type="entry name" value="Mito_carr"/>
    <property type="match status" value="3"/>
</dbReference>
<dbReference type="PRINTS" id="PR00927">
    <property type="entry name" value="ADPTRNSLCASE"/>
</dbReference>
<dbReference type="PRINTS" id="PR00926">
    <property type="entry name" value="MITOCARRIER"/>
</dbReference>
<dbReference type="SUPFAM" id="SSF103506">
    <property type="entry name" value="Mitochondrial carrier"/>
    <property type="match status" value="1"/>
</dbReference>
<dbReference type="PROSITE" id="PS50920">
    <property type="entry name" value="SOLCAR"/>
    <property type="match status" value="3"/>
</dbReference>
<evidence type="ECO:0000250" key="1"/>
<evidence type="ECO:0000250" key="2">
    <source>
        <dbReference type="UniProtKB" id="G2QNH0"/>
    </source>
</evidence>
<evidence type="ECO:0000250" key="3">
    <source>
        <dbReference type="UniProtKB" id="P02722"/>
    </source>
</evidence>
<evidence type="ECO:0000250" key="4">
    <source>
        <dbReference type="UniProtKB" id="P48962"/>
    </source>
</evidence>
<evidence type="ECO:0000255" key="5"/>
<evidence type="ECO:0000256" key="6">
    <source>
        <dbReference type="SAM" id="MobiDB-lite"/>
    </source>
</evidence>
<evidence type="ECO:0000305" key="7"/>
<protein>
    <recommendedName>
        <fullName>Probable ADP,ATP carrier protein At5g56450</fullName>
    </recommendedName>
    <alternativeName>
        <fullName>ADP/ATP translocase At5g56450</fullName>
    </alternativeName>
    <alternativeName>
        <fullName>Adenine nucleotide translocator At5g56450</fullName>
    </alternativeName>
</protein>
<comment type="function">
    <text evidence="4">ADP:ATP antiporter that catalyzes the exchange of ADP and ATP across the membrane.</text>
</comment>
<comment type="catalytic activity">
    <reaction evidence="4">
        <text>ADP(in) + ATP(out) = ADP(out) + ATP(in)</text>
        <dbReference type="Rhea" id="RHEA:34999"/>
        <dbReference type="ChEBI" id="CHEBI:30616"/>
        <dbReference type="ChEBI" id="CHEBI:456216"/>
    </reaction>
    <physiologicalReaction direction="left-to-right" evidence="4">
        <dbReference type="Rhea" id="RHEA:35000"/>
    </physiologicalReaction>
</comment>
<comment type="subunit">
    <text evidence="2 3">Monomer.</text>
</comment>
<comment type="subcellular location">
    <subcellularLocation>
        <location evidence="7">Membrane</location>
        <topology evidence="5">Multi-pass membrane protein</topology>
    </subcellularLocation>
</comment>
<comment type="miscellaneous">
    <text evidence="1">The transmembrane helices are not perpendicular to the plane of the membrane, but cross the membrane at an angle. At least 2 of the odd-numbered transmembrane helices exhibit a sharp kink, due to the presence of a conserved proline residue (By similarity).</text>
</comment>
<comment type="similarity">
    <text evidence="7">Belongs to the mitochondrial carrier (TC 2.A.29) family.</text>
</comment>
<gene>
    <name type="ordered locus">At5g56450</name>
    <name type="ORF">MCD7.21</name>
</gene>
<organism>
    <name type="scientific">Arabidopsis thaliana</name>
    <name type="common">Mouse-ear cress</name>
    <dbReference type="NCBI Taxonomy" id="3702"/>
    <lineage>
        <taxon>Eukaryota</taxon>
        <taxon>Viridiplantae</taxon>
        <taxon>Streptophyta</taxon>
        <taxon>Embryophyta</taxon>
        <taxon>Tracheophyta</taxon>
        <taxon>Spermatophyta</taxon>
        <taxon>Magnoliopsida</taxon>
        <taxon>eudicotyledons</taxon>
        <taxon>Gunneridae</taxon>
        <taxon>Pentapetalae</taxon>
        <taxon>rosids</taxon>
        <taxon>malvids</taxon>
        <taxon>Brassicales</taxon>
        <taxon>Brassicaceae</taxon>
        <taxon>Camelineae</taxon>
        <taxon>Arabidopsis</taxon>
    </lineage>
</organism>
<name>ADT5_ARATH</name>
<accession>Q9FM86</accession>
<accession>Q8LFZ1</accession>
<proteinExistence type="evidence at transcript level"/>